<keyword id="KW-0028">Amino-acid biosynthesis</keyword>
<keyword id="KW-0055">Arginine biosynthesis</keyword>
<keyword id="KW-0067">ATP-binding</keyword>
<keyword id="KW-0963">Cytoplasm</keyword>
<keyword id="KW-0418">Kinase</keyword>
<keyword id="KW-0547">Nucleotide-binding</keyword>
<keyword id="KW-0808">Transferase</keyword>
<reference key="1">
    <citation type="journal article" date="2006" name="Nat. Biotechnol.">
        <title>Complete genome sequence of the entomopathogenic and metabolically versatile soil bacterium Pseudomonas entomophila.</title>
        <authorList>
            <person name="Vodovar N."/>
            <person name="Vallenet D."/>
            <person name="Cruveiller S."/>
            <person name="Rouy Z."/>
            <person name="Barbe V."/>
            <person name="Acosta C."/>
            <person name="Cattolico L."/>
            <person name="Jubin C."/>
            <person name="Lajus A."/>
            <person name="Segurens B."/>
            <person name="Vacherie B."/>
            <person name="Wincker P."/>
            <person name="Weissenbach J."/>
            <person name="Lemaitre B."/>
            <person name="Medigue C."/>
            <person name="Boccard F."/>
        </authorList>
    </citation>
    <scope>NUCLEOTIDE SEQUENCE [LARGE SCALE GENOMIC DNA]</scope>
    <source>
        <strain>L48</strain>
    </source>
</reference>
<proteinExistence type="inferred from homology"/>
<organism>
    <name type="scientific">Pseudomonas entomophila (strain L48)</name>
    <dbReference type="NCBI Taxonomy" id="384676"/>
    <lineage>
        <taxon>Bacteria</taxon>
        <taxon>Pseudomonadati</taxon>
        <taxon>Pseudomonadota</taxon>
        <taxon>Gammaproteobacteria</taxon>
        <taxon>Pseudomonadales</taxon>
        <taxon>Pseudomonadaceae</taxon>
        <taxon>Pseudomonas</taxon>
    </lineage>
</organism>
<sequence>MTLDRDAASHVAEVLSEALPYIRRFVGKTLVIKYGGNAMESEELKTGFARDIVLMKAVGINPVVVHGGGPQIGDLLKRLSIESHFIDGMRVTDAATMDVVEMVLGGQVNKDIVNLINRHGGSAIGLTGKDAELIRARKLTVTRQTPEMTTPEIIDIGHVGEVVSVNTDLLNMLVKGDFIPVIAPIGVGANGESYNINADLVAGKVAEALKAEKLMLLTNIAGLMDKQGQVLTGLTTEQVNELIADGTIYGGMLPKIKCALDAVQGGVNSSHIIDGRVPNAVLLEIFTDSGVGTLITNRKRH</sequence>
<feature type="chain" id="PRO_1000010529" description="Acetylglutamate kinase">
    <location>
        <begin position="1"/>
        <end position="301"/>
    </location>
</feature>
<feature type="binding site" evidence="1">
    <location>
        <begin position="68"/>
        <end position="69"/>
    </location>
    <ligand>
        <name>substrate</name>
    </ligand>
</feature>
<feature type="binding site" evidence="1">
    <location>
        <position position="90"/>
    </location>
    <ligand>
        <name>substrate</name>
    </ligand>
</feature>
<feature type="binding site" evidence="1">
    <location>
        <position position="195"/>
    </location>
    <ligand>
        <name>substrate</name>
    </ligand>
</feature>
<feature type="site" description="Transition state stabilizer" evidence="1">
    <location>
        <position position="33"/>
    </location>
</feature>
<feature type="site" description="Transition state stabilizer" evidence="1">
    <location>
        <position position="255"/>
    </location>
</feature>
<comment type="function">
    <text evidence="1">Catalyzes the ATP-dependent phosphorylation of N-acetyl-L-glutamate.</text>
</comment>
<comment type="catalytic activity">
    <reaction evidence="1">
        <text>N-acetyl-L-glutamate + ATP = N-acetyl-L-glutamyl 5-phosphate + ADP</text>
        <dbReference type="Rhea" id="RHEA:14629"/>
        <dbReference type="ChEBI" id="CHEBI:30616"/>
        <dbReference type="ChEBI" id="CHEBI:44337"/>
        <dbReference type="ChEBI" id="CHEBI:57936"/>
        <dbReference type="ChEBI" id="CHEBI:456216"/>
        <dbReference type="EC" id="2.7.2.8"/>
    </reaction>
</comment>
<comment type="pathway">
    <text evidence="1">Amino-acid biosynthesis; L-arginine biosynthesis; N(2)-acetyl-L-ornithine from L-glutamate: step 2/4.</text>
</comment>
<comment type="subcellular location">
    <subcellularLocation>
        <location evidence="1">Cytoplasm</location>
    </subcellularLocation>
</comment>
<comment type="similarity">
    <text evidence="1">Belongs to the acetylglutamate kinase family. ArgB subfamily.</text>
</comment>
<accession>Q1I2T9</accession>
<dbReference type="EC" id="2.7.2.8" evidence="1"/>
<dbReference type="EMBL" id="CT573326">
    <property type="protein sequence ID" value="CAK18047.1"/>
    <property type="molecule type" value="Genomic_DNA"/>
</dbReference>
<dbReference type="RefSeq" id="WP_011536400.1">
    <property type="nucleotide sequence ID" value="NC_008027.1"/>
</dbReference>
<dbReference type="SMR" id="Q1I2T9"/>
<dbReference type="STRING" id="384676.PSEEN5435"/>
<dbReference type="GeneID" id="32808341"/>
<dbReference type="KEGG" id="pen:PSEEN5435"/>
<dbReference type="eggNOG" id="COG0548">
    <property type="taxonomic scope" value="Bacteria"/>
</dbReference>
<dbReference type="HOGENOM" id="CLU_053680_0_0_6"/>
<dbReference type="OrthoDB" id="9803155at2"/>
<dbReference type="UniPathway" id="UPA00068">
    <property type="reaction ID" value="UER00107"/>
</dbReference>
<dbReference type="Proteomes" id="UP000000658">
    <property type="component" value="Chromosome"/>
</dbReference>
<dbReference type="GO" id="GO:0005737">
    <property type="term" value="C:cytoplasm"/>
    <property type="evidence" value="ECO:0007669"/>
    <property type="project" value="UniProtKB-SubCell"/>
</dbReference>
<dbReference type="GO" id="GO:0003991">
    <property type="term" value="F:acetylglutamate kinase activity"/>
    <property type="evidence" value="ECO:0007669"/>
    <property type="project" value="UniProtKB-UniRule"/>
</dbReference>
<dbReference type="GO" id="GO:0005524">
    <property type="term" value="F:ATP binding"/>
    <property type="evidence" value="ECO:0007669"/>
    <property type="project" value="UniProtKB-UniRule"/>
</dbReference>
<dbReference type="GO" id="GO:0042450">
    <property type="term" value="P:arginine biosynthetic process via ornithine"/>
    <property type="evidence" value="ECO:0007669"/>
    <property type="project" value="UniProtKB-UniRule"/>
</dbReference>
<dbReference type="GO" id="GO:0006526">
    <property type="term" value="P:L-arginine biosynthetic process"/>
    <property type="evidence" value="ECO:0007669"/>
    <property type="project" value="UniProtKB-UniPathway"/>
</dbReference>
<dbReference type="CDD" id="cd04250">
    <property type="entry name" value="AAK_NAGK-C"/>
    <property type="match status" value="1"/>
</dbReference>
<dbReference type="FunFam" id="3.40.1160.10:FF:000004">
    <property type="entry name" value="Acetylglutamate kinase"/>
    <property type="match status" value="1"/>
</dbReference>
<dbReference type="Gene3D" id="3.40.1160.10">
    <property type="entry name" value="Acetylglutamate kinase-like"/>
    <property type="match status" value="1"/>
</dbReference>
<dbReference type="HAMAP" id="MF_00082">
    <property type="entry name" value="ArgB"/>
    <property type="match status" value="1"/>
</dbReference>
<dbReference type="InterPro" id="IPR036393">
    <property type="entry name" value="AceGlu_kinase-like_sf"/>
</dbReference>
<dbReference type="InterPro" id="IPR004662">
    <property type="entry name" value="AcgluKinase_fam"/>
</dbReference>
<dbReference type="InterPro" id="IPR037528">
    <property type="entry name" value="ArgB"/>
</dbReference>
<dbReference type="InterPro" id="IPR001048">
    <property type="entry name" value="Asp/Glu/Uridylate_kinase"/>
</dbReference>
<dbReference type="InterPro" id="IPR001057">
    <property type="entry name" value="Glu/AcGlu_kinase"/>
</dbReference>
<dbReference type="InterPro" id="IPR041727">
    <property type="entry name" value="NAGK-C"/>
</dbReference>
<dbReference type="NCBIfam" id="TIGR00761">
    <property type="entry name" value="argB"/>
    <property type="match status" value="1"/>
</dbReference>
<dbReference type="PANTHER" id="PTHR23342">
    <property type="entry name" value="N-ACETYLGLUTAMATE SYNTHASE"/>
    <property type="match status" value="1"/>
</dbReference>
<dbReference type="PANTHER" id="PTHR23342:SF0">
    <property type="entry name" value="N-ACETYLGLUTAMATE SYNTHASE, MITOCHONDRIAL"/>
    <property type="match status" value="1"/>
</dbReference>
<dbReference type="Pfam" id="PF00696">
    <property type="entry name" value="AA_kinase"/>
    <property type="match status" value="1"/>
</dbReference>
<dbReference type="PIRSF" id="PIRSF000728">
    <property type="entry name" value="NAGK"/>
    <property type="match status" value="1"/>
</dbReference>
<dbReference type="PRINTS" id="PR00474">
    <property type="entry name" value="GLU5KINASE"/>
</dbReference>
<dbReference type="SUPFAM" id="SSF53633">
    <property type="entry name" value="Carbamate kinase-like"/>
    <property type="match status" value="1"/>
</dbReference>
<name>ARGB_PSEE4</name>
<protein>
    <recommendedName>
        <fullName evidence="1">Acetylglutamate kinase</fullName>
        <ecNumber evidence="1">2.7.2.8</ecNumber>
    </recommendedName>
    <alternativeName>
        <fullName evidence="1">N-acetyl-L-glutamate 5-phosphotransferase</fullName>
    </alternativeName>
    <alternativeName>
        <fullName evidence="1">NAG kinase</fullName>
        <shortName evidence="1">NAGK</shortName>
    </alternativeName>
</protein>
<gene>
    <name evidence="1" type="primary">argB</name>
    <name type="ordered locus">PSEEN5435</name>
</gene>
<evidence type="ECO:0000255" key="1">
    <source>
        <dbReference type="HAMAP-Rule" id="MF_00082"/>
    </source>
</evidence>